<accession>Q9NB71</accession>
<accession>Q8MZ36</accession>
<accession>Q9VXZ5</accession>
<feature type="chain" id="PRO_0000055971" description="E3 ubiquitin-protein ligase highwire">
    <location>
        <begin position="1"/>
        <end position="5233"/>
    </location>
</feature>
<feature type="repeat" description="RCC1 1" evidence="3">
    <location>
        <begin position="615"/>
        <end position="666"/>
    </location>
</feature>
<feature type="repeat" description="RCC1 2" evidence="3">
    <location>
        <begin position="669"/>
        <end position="724"/>
    </location>
</feature>
<feature type="repeat" description="RCC1 3" evidence="3">
    <location>
        <begin position="768"/>
        <end position="818"/>
    </location>
</feature>
<feature type="repeat" description="RCC1 4" evidence="3">
    <location>
        <begin position="931"/>
        <end position="983"/>
    </location>
</feature>
<feature type="repeat" description="RCC1 5" evidence="3">
    <location>
        <begin position="984"/>
        <end position="1033"/>
    </location>
</feature>
<feature type="repeat" description="RCC1 6" evidence="3">
    <location>
        <begin position="1035"/>
        <end position="1084"/>
    </location>
</feature>
<feature type="repeat" description="Filamin" evidence="3">
    <location>
        <begin position="2906"/>
        <end position="3000"/>
    </location>
</feature>
<feature type="domain" description="DOC" evidence="5">
    <location>
        <begin position="4195"/>
        <end position="4374"/>
    </location>
</feature>
<feature type="zinc finger region" description="RING-type; atypical" evidence="4">
    <location>
        <begin position="4991"/>
        <end position="5042"/>
    </location>
</feature>
<feature type="region of interest" description="Disordered" evidence="6">
    <location>
        <begin position="197"/>
        <end position="230"/>
    </location>
</feature>
<feature type="region of interest" description="Disordered" evidence="6">
    <location>
        <begin position="680"/>
        <end position="700"/>
    </location>
</feature>
<feature type="region of interest" description="Disordered" evidence="6">
    <location>
        <begin position="900"/>
        <end position="950"/>
    </location>
</feature>
<feature type="region of interest" description="Disordered" evidence="6">
    <location>
        <begin position="1051"/>
        <end position="1109"/>
    </location>
</feature>
<feature type="region of interest" description="Disordered" evidence="6">
    <location>
        <begin position="1287"/>
        <end position="1327"/>
    </location>
</feature>
<feature type="region of interest" description="PHR domain 1" evidence="12">
    <location>
        <begin position="1436"/>
        <end position="1587"/>
    </location>
</feature>
<feature type="region of interest" description="Disordered" evidence="6">
    <location>
        <begin position="1681"/>
        <end position="1718"/>
    </location>
</feature>
<feature type="region of interest" description="PHR domain 2" evidence="12">
    <location>
        <begin position="2014"/>
        <end position="2169"/>
    </location>
</feature>
<feature type="region of interest" description="Disordered" evidence="6">
    <location>
        <begin position="2329"/>
        <end position="2353"/>
    </location>
</feature>
<feature type="region of interest" description="Disordered" evidence="6">
    <location>
        <begin position="2580"/>
        <end position="2604"/>
    </location>
</feature>
<feature type="region of interest" description="Required for interaction with Rae1" evidence="12">
    <location>
        <begin position="2885"/>
        <end position="4082"/>
    </location>
</feature>
<feature type="region of interest" description="Disordered" evidence="6">
    <location>
        <begin position="3005"/>
        <end position="3024"/>
    </location>
</feature>
<feature type="region of interest" description="Disordered" evidence="6">
    <location>
        <begin position="3117"/>
        <end position="3210"/>
    </location>
</feature>
<feature type="region of interest" description="Disordered" evidence="6">
    <location>
        <begin position="3277"/>
        <end position="3333"/>
    </location>
</feature>
<feature type="region of interest" description="Disordered" evidence="6">
    <location>
        <begin position="3348"/>
        <end position="3378"/>
    </location>
</feature>
<feature type="region of interest" description="Disordered" evidence="6">
    <location>
        <begin position="3551"/>
        <end position="3587"/>
    </location>
</feature>
<feature type="region of interest" description="Disordered" evidence="6">
    <location>
        <begin position="3901"/>
        <end position="3936"/>
    </location>
</feature>
<feature type="region of interest" description="Disordered" evidence="6">
    <location>
        <begin position="4633"/>
        <end position="4655"/>
    </location>
</feature>
<feature type="region of interest" description="Disordered" evidence="6">
    <location>
        <begin position="4680"/>
        <end position="4702"/>
    </location>
</feature>
<feature type="region of interest" description="Tandem cysteine domain" evidence="1">
    <location>
        <begin position="5096"/>
        <end position="5231"/>
    </location>
</feature>
<feature type="compositionally biased region" description="Basic and acidic residues" evidence="6">
    <location>
        <begin position="205"/>
        <end position="214"/>
    </location>
</feature>
<feature type="compositionally biased region" description="Basic residues" evidence="6">
    <location>
        <begin position="689"/>
        <end position="700"/>
    </location>
</feature>
<feature type="compositionally biased region" description="Polar residues" evidence="6">
    <location>
        <begin position="908"/>
        <end position="917"/>
    </location>
</feature>
<feature type="compositionally biased region" description="Polar residues" evidence="6">
    <location>
        <begin position="1092"/>
        <end position="1103"/>
    </location>
</feature>
<feature type="compositionally biased region" description="Low complexity" evidence="6">
    <location>
        <begin position="1287"/>
        <end position="1302"/>
    </location>
</feature>
<feature type="compositionally biased region" description="Polar residues" evidence="6">
    <location>
        <begin position="1699"/>
        <end position="1709"/>
    </location>
</feature>
<feature type="compositionally biased region" description="Low complexity" evidence="6">
    <location>
        <begin position="2336"/>
        <end position="2350"/>
    </location>
</feature>
<feature type="compositionally biased region" description="Basic and acidic residues" evidence="6">
    <location>
        <begin position="3176"/>
        <end position="3191"/>
    </location>
</feature>
<feature type="compositionally biased region" description="Acidic residues" evidence="6">
    <location>
        <begin position="3192"/>
        <end position="3210"/>
    </location>
</feature>
<feature type="compositionally biased region" description="Polar residues" evidence="6">
    <location>
        <begin position="3282"/>
        <end position="3292"/>
    </location>
</feature>
<feature type="compositionally biased region" description="Low complexity" evidence="6">
    <location>
        <begin position="3348"/>
        <end position="3371"/>
    </location>
</feature>
<feature type="compositionally biased region" description="Low complexity" evidence="6">
    <location>
        <begin position="3917"/>
        <end position="3932"/>
    </location>
</feature>
<feature type="compositionally biased region" description="Gly residues" evidence="6">
    <location>
        <begin position="4638"/>
        <end position="4652"/>
    </location>
</feature>
<feature type="active site" evidence="1">
    <location>
        <position position="5115"/>
    </location>
</feature>
<feature type="active site" evidence="1">
    <location>
        <position position="5165"/>
    </location>
</feature>
<feature type="binding site" evidence="1">
    <location>
        <position position="4991"/>
    </location>
    <ligand>
        <name>Zn(2+)</name>
        <dbReference type="ChEBI" id="CHEBI:29105"/>
        <label>1</label>
    </ligand>
</feature>
<feature type="binding site" evidence="1">
    <location>
        <position position="4994"/>
    </location>
    <ligand>
        <name>Zn(2+)</name>
        <dbReference type="ChEBI" id="CHEBI:29105"/>
        <label>1</label>
    </ligand>
</feature>
<feature type="binding site" evidence="1">
    <location>
        <position position="5009"/>
    </location>
    <ligand>
        <name>Zn(2+)</name>
        <dbReference type="ChEBI" id="CHEBI:29105"/>
        <label>2</label>
    </ligand>
</feature>
<feature type="binding site" evidence="1">
    <location>
        <position position="5011"/>
    </location>
    <ligand>
        <name>Zn(2+)</name>
        <dbReference type="ChEBI" id="CHEBI:29105"/>
        <label>2</label>
    </ligand>
</feature>
<feature type="binding site" evidence="1">
    <location>
        <position position="5014"/>
    </location>
    <ligand>
        <name>Zn(2+)</name>
        <dbReference type="ChEBI" id="CHEBI:29105"/>
        <label>1</label>
    </ligand>
</feature>
<feature type="binding site" evidence="1">
    <location>
        <position position="5017"/>
    </location>
    <ligand>
        <name>Zn(2+)</name>
        <dbReference type="ChEBI" id="CHEBI:29105"/>
        <label>1</label>
    </ligand>
</feature>
<feature type="binding site" evidence="1">
    <location>
        <position position="5038"/>
    </location>
    <ligand>
        <name>Zn(2+)</name>
        <dbReference type="ChEBI" id="CHEBI:29105"/>
        <label>2</label>
    </ligand>
</feature>
<feature type="binding site" evidence="1">
    <location>
        <position position="5041"/>
    </location>
    <ligand>
        <name>Zn(2+)</name>
        <dbReference type="ChEBI" id="CHEBI:29105"/>
        <label>2</label>
    </ligand>
</feature>
<feature type="binding site" evidence="1">
    <location>
        <position position="5101"/>
    </location>
    <ligand>
        <name>Zn(2+)</name>
        <dbReference type="ChEBI" id="CHEBI:29105"/>
        <label>3</label>
    </ligand>
</feature>
<feature type="binding site" evidence="1">
    <location>
        <position position="5104"/>
    </location>
    <ligand>
        <name>Zn(2+)</name>
        <dbReference type="ChEBI" id="CHEBI:29105"/>
        <label>3</label>
    </ligand>
</feature>
<feature type="binding site" evidence="1">
    <location>
        <position position="5130"/>
    </location>
    <ligand>
        <name>Zn(2+)</name>
        <dbReference type="ChEBI" id="CHEBI:29105"/>
        <label>3</label>
    </ligand>
</feature>
<feature type="binding site" evidence="1">
    <location>
        <position position="5133"/>
    </location>
    <ligand>
        <name>Zn(2+)</name>
        <dbReference type="ChEBI" id="CHEBI:29105"/>
        <label>3</label>
    </ligand>
</feature>
<feature type="binding site" evidence="1">
    <location>
        <position position="5142"/>
    </location>
    <ligand>
        <name>Zn(2+)</name>
        <dbReference type="ChEBI" id="CHEBI:29105"/>
        <label>4</label>
    </ligand>
</feature>
<feature type="binding site" evidence="1">
    <location>
        <position position="5145"/>
    </location>
    <ligand>
        <name>Zn(2+)</name>
        <dbReference type="ChEBI" id="CHEBI:29105"/>
        <label>4</label>
    </ligand>
</feature>
<feature type="binding site" evidence="1">
    <location>
        <position position="5154"/>
    </location>
    <ligand>
        <name>Zn(2+)</name>
        <dbReference type="ChEBI" id="CHEBI:29105"/>
        <label>5</label>
    </ligand>
</feature>
<feature type="binding site" evidence="1">
    <location>
        <position position="5157"/>
    </location>
    <ligand>
        <name>Zn(2+)</name>
        <dbReference type="ChEBI" id="CHEBI:29105"/>
        <label>5</label>
    </ligand>
</feature>
<feature type="binding site" evidence="1">
    <location>
        <position position="5158"/>
    </location>
    <ligand>
        <name>Zn(2+)</name>
        <dbReference type="ChEBI" id="CHEBI:29105"/>
        <label>6</label>
    </ligand>
</feature>
<feature type="binding site" evidence="1">
    <location>
        <position position="5172"/>
    </location>
    <ligand>
        <name>Zn(2+)</name>
        <dbReference type="ChEBI" id="CHEBI:29105"/>
        <label>5</label>
    </ligand>
</feature>
<feature type="binding site" evidence="1">
    <location>
        <position position="5175"/>
    </location>
    <ligand>
        <name>Zn(2+)</name>
        <dbReference type="ChEBI" id="CHEBI:29105"/>
        <label>5</label>
    </ligand>
</feature>
<feature type="binding site" evidence="1">
    <location>
        <position position="5193"/>
    </location>
    <ligand>
        <name>Zn(2+)</name>
        <dbReference type="ChEBI" id="CHEBI:29105"/>
        <label>6</label>
    </ligand>
</feature>
<feature type="binding site" evidence="1">
    <location>
        <position position="5207"/>
    </location>
    <ligand>
        <name>Zn(2+)</name>
        <dbReference type="ChEBI" id="CHEBI:29105"/>
        <label>6</label>
    </ligand>
</feature>
<feature type="binding site" evidence="1">
    <location>
        <position position="5213"/>
    </location>
    <ligand>
        <name>Zn(2+)</name>
        <dbReference type="ChEBI" id="CHEBI:29105"/>
        <label>6</label>
    </ligand>
</feature>
<feature type="binding site" evidence="1">
    <location>
        <position position="5224"/>
    </location>
    <ligand>
        <name>Zn(2+)</name>
        <dbReference type="ChEBI" id="CHEBI:29105"/>
        <label>4</label>
    </ligand>
</feature>
<feature type="binding site" evidence="1">
    <location>
        <position position="5227"/>
    </location>
    <ligand>
        <name>Zn(2+)</name>
        <dbReference type="ChEBI" id="CHEBI:29105"/>
        <label>4</label>
    </ligand>
</feature>
<feature type="site" description="Important for catalysis" evidence="1">
    <location>
        <position position="5166"/>
    </location>
</feature>
<feature type="site" description="Important for catalysis" evidence="1">
    <location>
        <position position="5171"/>
    </location>
</feature>
<feature type="site" description="Important for catalysis" evidence="1">
    <location>
        <position position="5179"/>
    </location>
</feature>
<feature type="modified residue" description="Phosphoserine" evidence="11">
    <location>
        <position position="213"/>
    </location>
</feature>
<feature type="modified residue" description="Phosphoserine" evidence="11">
    <location>
        <position position="216"/>
    </location>
</feature>
<feature type="mutagenesis site" description="Loss of binding to Rae1 and unable to rescue synaptic terminal overgrowth in mutants." evidence="12">
    <location>
        <begin position="1"/>
        <end position="4083"/>
    </location>
</feature>
<feature type="mutagenesis site" description="Unable to rescue synaptic terminal overgrowth in mutants but has no effect on binding to Rae1." evidence="12">
    <location>
        <begin position="1"/>
        <end position="2419"/>
    </location>
</feature>
<feature type="mutagenesis site" description="Unable to rescue synaptic terminal overgrowth in mutants but has no effect on binding to Rae1; when associated with 1012-E--E-1014." evidence="12">
    <location>
        <begin position="671"/>
        <end position="1011"/>
    </location>
</feature>
<feature type="mutagenesis site" description="Unable to rescue synaptic terminal overgrowth in mutants but has no effect on binding to Rae1; when associated with 671-T--R-1011 DEL." evidence="12">
    <original>VQV</original>
    <variation>ELE</variation>
    <location>
        <begin position="1012"/>
        <end position="1014"/>
    </location>
</feature>
<feature type="mutagenesis site" description="Unable to rescue synaptic terminal overgrowth in mutants but has no effect on binding to Rae1." evidence="12">
    <location>
        <begin position="1266"/>
        <end position="2146"/>
    </location>
</feature>
<feature type="mutagenesis site" description="Loss of binding to Rae1 and unable to rescue synaptic terminal overgrowth in mutants." evidence="12">
    <location>
        <begin position="2885"/>
        <end position="5233"/>
    </location>
</feature>
<feature type="mutagenesis site" description="Unable to rescue synaptic terminal overgrowth in mutants but has no effect on binding to Rae1." evidence="12">
    <location>
        <begin position="3800"/>
        <end position="4039"/>
    </location>
</feature>
<feature type="mutagenesis site" description="Unable to rescue synaptic terminal overgrowth in mutants but has no effect on binding to Rae1; when associated with S-5041." evidence="12">
    <original>C</original>
    <variation>S</variation>
    <location>
        <position position="5038"/>
    </location>
</feature>
<feature type="mutagenesis site" description="Unable to rescue synaptic terminal overgrowth in mutants but has no effect on binding to Rae1; when associated with S-5038." evidence="12">
    <original>C</original>
    <variation>S</variation>
    <location>
        <position position="5041"/>
    </location>
</feature>
<feature type="sequence conflict" description="In Ref. 1; AAF76150." evidence="14" ref="1">
    <original>N</original>
    <variation>D</variation>
    <location>
        <position position="137"/>
    </location>
</feature>
<feature type="sequence conflict" description="In Ref. 1; AAF76150." evidence="14" ref="1">
    <original>C</original>
    <variation>R</variation>
    <location>
        <position position="604"/>
    </location>
</feature>
<feature type="sequence conflict" description="In Ref. 1; AAF76150." evidence="14" ref="1">
    <original>F</original>
    <variation>S</variation>
    <location>
        <position position="1620"/>
    </location>
</feature>
<feature type="sequence conflict" description="In Ref. 1; AAF76150." evidence="14" ref="1">
    <original>G</original>
    <variation>E</variation>
    <location>
        <position position="4652"/>
    </location>
</feature>
<keyword id="KW-0966">Cell projection</keyword>
<keyword id="KW-0479">Metal-binding</keyword>
<keyword id="KW-0597">Phosphoprotein</keyword>
<keyword id="KW-1185">Reference proteome</keyword>
<keyword id="KW-0677">Repeat</keyword>
<keyword id="KW-0770">Synapse</keyword>
<keyword id="KW-0804">Transcription</keyword>
<keyword id="KW-0805">Transcription regulation</keyword>
<keyword id="KW-0808">Transferase</keyword>
<keyword id="KW-0833">Ubl conjugation pathway</keyword>
<keyword id="KW-0862">Zinc</keyword>
<keyword id="KW-0863">Zinc-finger</keyword>
<gene>
    <name evidence="13 18" type="primary">hiw</name>
    <name type="ORF">CG32592</name>
</gene>
<protein>
    <recommendedName>
        <fullName evidence="13">E3 ubiquitin-protein ligase highwire</fullName>
        <ecNumber evidence="1">2.3.2.33</ecNumber>
    </recommendedName>
    <alternativeName>
        <fullName>Protein pam/highwire/rpm-1</fullName>
    </alternativeName>
</protein>
<reference evidence="14 16" key="1">
    <citation type="journal article" date="2000" name="Neuron">
        <title>Highwire regulates synaptic growth in Drosophila.</title>
        <authorList>
            <person name="Wan H.I."/>
            <person name="DiAntonio A."/>
            <person name="Fetter R.D."/>
            <person name="Bergstrom K."/>
            <person name="Strauss R."/>
            <person name="Goodman C.S."/>
        </authorList>
    </citation>
    <scope>NUCLEOTIDE SEQUENCE [MRNA]</scope>
    <scope>FUNCTION</scope>
    <scope>SUBCELLULAR LOCATION</scope>
    <scope>TISSUE SPECIFICITY</scope>
    <scope>DISRUPTION PHENOTYPE</scope>
    <source>
        <strain evidence="16">Canton-S</strain>
    </source>
</reference>
<reference evidence="15" key="2">
    <citation type="journal article" date="2000" name="Science">
        <title>The genome sequence of Drosophila melanogaster.</title>
        <authorList>
            <person name="Adams M.D."/>
            <person name="Celniker S.E."/>
            <person name="Holt R.A."/>
            <person name="Evans C.A."/>
            <person name="Gocayne J.D."/>
            <person name="Amanatides P.G."/>
            <person name="Scherer S.E."/>
            <person name="Li P.W."/>
            <person name="Hoskins R.A."/>
            <person name="Galle R.F."/>
            <person name="George R.A."/>
            <person name="Lewis S.E."/>
            <person name="Richards S."/>
            <person name="Ashburner M."/>
            <person name="Henderson S.N."/>
            <person name="Sutton G.G."/>
            <person name="Wortman J.R."/>
            <person name="Yandell M.D."/>
            <person name="Zhang Q."/>
            <person name="Chen L.X."/>
            <person name="Brandon R.C."/>
            <person name="Rogers Y.-H.C."/>
            <person name="Blazej R.G."/>
            <person name="Champe M."/>
            <person name="Pfeiffer B.D."/>
            <person name="Wan K.H."/>
            <person name="Doyle C."/>
            <person name="Baxter E.G."/>
            <person name="Helt G."/>
            <person name="Nelson C.R."/>
            <person name="Miklos G.L.G."/>
            <person name="Abril J.F."/>
            <person name="Agbayani A."/>
            <person name="An H.-J."/>
            <person name="Andrews-Pfannkoch C."/>
            <person name="Baldwin D."/>
            <person name="Ballew R.M."/>
            <person name="Basu A."/>
            <person name="Baxendale J."/>
            <person name="Bayraktaroglu L."/>
            <person name="Beasley E.M."/>
            <person name="Beeson K.Y."/>
            <person name="Benos P.V."/>
            <person name="Berman B.P."/>
            <person name="Bhandari D."/>
            <person name="Bolshakov S."/>
            <person name="Borkova D."/>
            <person name="Botchan M.R."/>
            <person name="Bouck J."/>
            <person name="Brokstein P."/>
            <person name="Brottier P."/>
            <person name="Burtis K.C."/>
            <person name="Busam D.A."/>
            <person name="Butler H."/>
            <person name="Cadieu E."/>
            <person name="Center A."/>
            <person name="Chandra I."/>
            <person name="Cherry J.M."/>
            <person name="Cawley S."/>
            <person name="Dahlke C."/>
            <person name="Davenport L.B."/>
            <person name="Davies P."/>
            <person name="de Pablos B."/>
            <person name="Delcher A."/>
            <person name="Deng Z."/>
            <person name="Mays A.D."/>
            <person name="Dew I."/>
            <person name="Dietz S.M."/>
            <person name="Dodson K."/>
            <person name="Doup L.E."/>
            <person name="Downes M."/>
            <person name="Dugan-Rocha S."/>
            <person name="Dunkov B.C."/>
            <person name="Dunn P."/>
            <person name="Durbin K.J."/>
            <person name="Evangelista C.C."/>
            <person name="Ferraz C."/>
            <person name="Ferriera S."/>
            <person name="Fleischmann W."/>
            <person name="Fosler C."/>
            <person name="Gabrielian A.E."/>
            <person name="Garg N.S."/>
            <person name="Gelbart W.M."/>
            <person name="Glasser K."/>
            <person name="Glodek A."/>
            <person name="Gong F."/>
            <person name="Gorrell J.H."/>
            <person name="Gu Z."/>
            <person name="Guan P."/>
            <person name="Harris M."/>
            <person name="Harris N.L."/>
            <person name="Harvey D.A."/>
            <person name="Heiman T.J."/>
            <person name="Hernandez J.R."/>
            <person name="Houck J."/>
            <person name="Hostin D."/>
            <person name="Houston K.A."/>
            <person name="Howland T.J."/>
            <person name="Wei M.-H."/>
            <person name="Ibegwam C."/>
            <person name="Jalali M."/>
            <person name="Kalush F."/>
            <person name="Karpen G.H."/>
            <person name="Ke Z."/>
            <person name="Kennison J.A."/>
            <person name="Ketchum K.A."/>
            <person name="Kimmel B.E."/>
            <person name="Kodira C.D."/>
            <person name="Kraft C.L."/>
            <person name="Kravitz S."/>
            <person name="Kulp D."/>
            <person name="Lai Z."/>
            <person name="Lasko P."/>
            <person name="Lei Y."/>
            <person name="Levitsky A.A."/>
            <person name="Li J.H."/>
            <person name="Li Z."/>
            <person name="Liang Y."/>
            <person name="Lin X."/>
            <person name="Liu X."/>
            <person name="Mattei B."/>
            <person name="McIntosh T.C."/>
            <person name="McLeod M.P."/>
            <person name="McPherson D."/>
            <person name="Merkulov G."/>
            <person name="Milshina N.V."/>
            <person name="Mobarry C."/>
            <person name="Morris J."/>
            <person name="Moshrefi A."/>
            <person name="Mount S.M."/>
            <person name="Moy M."/>
            <person name="Murphy B."/>
            <person name="Murphy L."/>
            <person name="Muzny D.M."/>
            <person name="Nelson D.L."/>
            <person name="Nelson D.R."/>
            <person name="Nelson K.A."/>
            <person name="Nixon K."/>
            <person name="Nusskern D.R."/>
            <person name="Pacleb J.M."/>
            <person name="Palazzolo M."/>
            <person name="Pittman G.S."/>
            <person name="Pan S."/>
            <person name="Pollard J."/>
            <person name="Puri V."/>
            <person name="Reese M.G."/>
            <person name="Reinert K."/>
            <person name="Remington K."/>
            <person name="Saunders R.D.C."/>
            <person name="Scheeler F."/>
            <person name="Shen H."/>
            <person name="Shue B.C."/>
            <person name="Siden-Kiamos I."/>
            <person name="Simpson M."/>
            <person name="Skupski M.P."/>
            <person name="Smith T.J."/>
            <person name="Spier E."/>
            <person name="Spradling A.C."/>
            <person name="Stapleton M."/>
            <person name="Strong R."/>
            <person name="Sun E."/>
            <person name="Svirskas R."/>
            <person name="Tector C."/>
            <person name="Turner R."/>
            <person name="Venter E."/>
            <person name="Wang A.H."/>
            <person name="Wang X."/>
            <person name="Wang Z.-Y."/>
            <person name="Wassarman D.A."/>
            <person name="Weinstock G.M."/>
            <person name="Weissenbach J."/>
            <person name="Williams S.M."/>
            <person name="Woodage T."/>
            <person name="Worley K.C."/>
            <person name="Wu D."/>
            <person name="Yang S."/>
            <person name="Yao Q.A."/>
            <person name="Ye J."/>
            <person name="Yeh R.-F."/>
            <person name="Zaveri J.S."/>
            <person name="Zhan M."/>
            <person name="Zhang G."/>
            <person name="Zhao Q."/>
            <person name="Zheng L."/>
            <person name="Zheng X.H."/>
            <person name="Zhong F.N."/>
            <person name="Zhong W."/>
            <person name="Zhou X."/>
            <person name="Zhu S.C."/>
            <person name="Zhu X."/>
            <person name="Smith H.O."/>
            <person name="Gibbs R.A."/>
            <person name="Myers E.W."/>
            <person name="Rubin G.M."/>
            <person name="Venter J.C."/>
        </authorList>
    </citation>
    <scope>NUCLEOTIDE SEQUENCE [LARGE SCALE GENOMIC DNA]</scope>
    <source>
        <strain evidence="7">Berkeley</strain>
    </source>
</reference>
<reference evidence="14 15" key="3">
    <citation type="journal article" date="2002" name="Genome Biol.">
        <title>Annotation of the Drosophila melanogaster euchromatic genome: a systematic review.</title>
        <authorList>
            <person name="Misra S."/>
            <person name="Crosby M.A."/>
            <person name="Mungall C.J."/>
            <person name="Matthews B.B."/>
            <person name="Campbell K.S."/>
            <person name="Hradecky P."/>
            <person name="Huang Y."/>
            <person name="Kaminker J.S."/>
            <person name="Millburn G.H."/>
            <person name="Prochnik S.E."/>
            <person name="Smith C.D."/>
            <person name="Tupy J.L."/>
            <person name="Whitfield E.J."/>
            <person name="Bayraktaroglu L."/>
            <person name="Berman B.P."/>
            <person name="Bettencourt B.R."/>
            <person name="Celniker S.E."/>
            <person name="de Grey A.D.N.J."/>
            <person name="Drysdale R.A."/>
            <person name="Harris N.L."/>
            <person name="Richter J."/>
            <person name="Russo S."/>
            <person name="Schroeder A.J."/>
            <person name="Shu S.Q."/>
            <person name="Stapleton M."/>
            <person name="Yamada C."/>
            <person name="Ashburner M."/>
            <person name="Gelbart W.M."/>
            <person name="Rubin G.M."/>
            <person name="Lewis S.E."/>
        </authorList>
    </citation>
    <scope>GENOME REANNOTATION</scope>
    <source>
        <strain>Berkeley</strain>
    </source>
</reference>
<reference evidence="14 17" key="4">
    <citation type="journal article" date="2002" name="Genome Biol.">
        <title>A Drosophila full-length cDNA resource.</title>
        <authorList>
            <person name="Stapleton M."/>
            <person name="Carlson J.W."/>
            <person name="Brokstein P."/>
            <person name="Yu C."/>
            <person name="Champe M."/>
            <person name="George R.A."/>
            <person name="Guarin H."/>
            <person name="Kronmiller B."/>
            <person name="Pacleb J.M."/>
            <person name="Park S."/>
            <person name="Wan K.H."/>
            <person name="Rubin G.M."/>
            <person name="Celniker S.E."/>
        </authorList>
    </citation>
    <scope>NUCLEOTIDE SEQUENCE [LARGE SCALE MRNA] OF 4083-5233</scope>
    <source>
        <strain evidence="17">Berkeley</strain>
        <tissue evidence="9">Larva</tissue>
        <tissue evidence="9">Pupae</tissue>
    </source>
</reference>
<reference key="5">
    <citation type="journal article" date="2007" name="Neural Dev.">
        <title>DFsn collaborates with Highwire to down-regulate the Wallenda/DLK kinase and restrain synaptic terminal growth.</title>
        <authorList>
            <person name="Wu C."/>
            <person name="Daniels R.W."/>
            <person name="DiAntonio A."/>
        </authorList>
    </citation>
    <scope>FUNCTION</scope>
    <scope>IDENTIFICATION IN A COMPLEX WITH FSN</scope>
    <scope>INTERACTION WITH FSN</scope>
    <scope>IDENTIFICATION BY MASS SPECTROMETRY</scope>
</reference>
<reference key="6">
    <citation type="journal article" date="2008" name="J. Proteome Res.">
        <title>Phosphoproteome analysis of Drosophila melanogaster embryos.</title>
        <authorList>
            <person name="Zhai B."/>
            <person name="Villen J."/>
            <person name="Beausoleil S.A."/>
            <person name="Mintseris J."/>
            <person name="Gygi S.P."/>
        </authorList>
    </citation>
    <scope>PHOSPHORYLATION [LARGE SCALE ANALYSIS] AT SER-213 AND SER-216</scope>
    <scope>IDENTIFICATION BY MASS SPECTROMETRY</scope>
    <source>
        <tissue>Embryo</tissue>
    </source>
</reference>
<reference key="7">
    <citation type="journal article" date="2011" name="Nat. Neurosci.">
        <title>Drosophila Rae1 controls the abundance of the ubiquitin ligase Highwire in post-mitotic neurons.</title>
        <authorList>
            <person name="Tian X."/>
            <person name="Li J."/>
            <person name="Valakh V."/>
            <person name="DiAntonio A."/>
            <person name="Wu C."/>
        </authorList>
    </citation>
    <scope>FUNCTION</scope>
    <scope>IDENTIFICATION IN A COMPLEX WITH FSN AND RAE1</scope>
    <scope>INTERACTION WITH RAE1</scope>
    <scope>TISSUE SPECIFICITY</scope>
    <scope>IDENTIFICATION BY MASS SPECTROMETRY</scope>
    <scope>MUTAGENESIS OF 1-MET--GLU-2419; 1-MET--HIS-4083; 671-THR--ARG-1011; 1012-VAL-VAL-1014; 1266-ARG--TYR-2146; 2885-ALA--PHE-5233; 3800-PHE--SER-4039; CYS-5038 AND CYS-5041</scope>
</reference>
<evidence type="ECO:0000250" key="1">
    <source>
        <dbReference type="UniProtKB" id="O75592"/>
    </source>
</evidence>
<evidence type="ECO:0000250" key="2">
    <source>
        <dbReference type="UniProtKB" id="Q7TPH6"/>
    </source>
</evidence>
<evidence type="ECO:0000255" key="3"/>
<evidence type="ECO:0000255" key="4">
    <source>
        <dbReference type="PROSITE-ProRule" id="PRU00175"/>
    </source>
</evidence>
<evidence type="ECO:0000255" key="5">
    <source>
        <dbReference type="PROSITE-ProRule" id="PRU00614"/>
    </source>
</evidence>
<evidence type="ECO:0000256" key="6">
    <source>
        <dbReference type="SAM" id="MobiDB-lite"/>
    </source>
</evidence>
<evidence type="ECO:0000269" key="7">
    <source>
    </source>
</evidence>
<evidence type="ECO:0000269" key="8">
    <source>
    </source>
</evidence>
<evidence type="ECO:0000269" key="9">
    <source>
    </source>
</evidence>
<evidence type="ECO:0000269" key="10">
    <source>
    </source>
</evidence>
<evidence type="ECO:0000269" key="11">
    <source>
    </source>
</evidence>
<evidence type="ECO:0000269" key="12">
    <source>
    </source>
</evidence>
<evidence type="ECO:0000303" key="13">
    <source>
    </source>
</evidence>
<evidence type="ECO:0000305" key="14"/>
<evidence type="ECO:0000312" key="15">
    <source>
        <dbReference type="EMBL" id="AAF48411.2"/>
    </source>
</evidence>
<evidence type="ECO:0000312" key="16">
    <source>
        <dbReference type="EMBL" id="AAF76150.1"/>
    </source>
</evidence>
<evidence type="ECO:0000312" key="17">
    <source>
        <dbReference type="EMBL" id="AAM29381.1"/>
    </source>
</evidence>
<evidence type="ECO:0000312" key="18">
    <source>
        <dbReference type="FlyBase" id="FBgn0030600"/>
    </source>
</evidence>
<sequence>MVGLLNPLKYGDHFYELYTNSTRRKMQHDRKVLTKRKSRKDKSAAAMAAAAAAAVLEGNAGAGGLVNPLDPPLVKEQLMILPSFPVAHIELDPNASKFAVFSAIRSTVLEAETRYSLFQEGGAPSGQSGSNQKKWSNNVNSACCMMCAHSCMISNLLDCSCHAHMAMHGAVGPGNAGPGGPVGVLVDGRIPAPVPVVVGGPGLPAEKRPRRDSANSDADSDTEEPTEREPVYATVPLIVGAGLRSLFELIADARHVHPLLCTKALKALLDVIQGQQPESFKLEPEELINPLYDLLLDLATMPAALNSATGAEANWSAMACAALLGLCIARGDTGKMLKAIAAMLMTPRQLSAQIVQLPVVLATLQHTVISAALNKPTRPDFHSHGVPHNSLIDEFPVKLPPLSTGAPITSPAMACDGVFVYLLYGGTLLKIGTGFGGSYKGHIYAQNEDFSHERSAWLGYSGGQLYFRRTCRRSAGDQLQMVGLDTLAIKAMSPLSMLHMREGLNYVLFTDDDSLHAICSNRDDTLVVKKLNLYHNSYNIDPPPFELPLQLARKKFRTLGYAAFEDELLNQYQIQRIQSAHNSFEPKLPAPCRDADVDVMGMACGKEFGLVRASNGRVYYYGKSAALGLKCVGRTPTLKLTELVISKAANIVHVAVGHDGIHALLVNDDGTVFFAGTARRGEDGDSSKNRRQPKAVKPKKMTKIDGHVVVHAACNNGTSAFVTKTGKLIMYGKDTAHCDAMGFVSELLEQHVTKVALGKAHCVALNAKGQLFSFGLNNKGQCGRIFNKLQPVKDVPPFASSSTAAACFASLLPLDKRLKLDFSTLCDYDDHNLVQGQCRVCVICRECTGYNVSCVSALNVPLDQRLAGSICPCGHGDAGCAKCGLCAACIALQDSDEAKTELKPPPSDVQQRQQRSKTLIMRRKERKGELETGAAGGGAATPTDLDKDPPRVAPLAPQLLQLTSSSPVVQVACGLHHTVVLTLAGEVYTFGSNQYGQLGSGDLQPVSGPVRVQVPGAISQVAAGSNHTVLLTSKGMVYTFGNYQKGQLGRLPSDYGLKPPPQDDDSPVGAGSDGGAGGSPTVAPVGMPGPERSQSPANVQPSGSKEMPPLLPVLTQRQKFLWNCSPGAVFGLGPCYGKKVTWIGANGDQTFIKIDESLITAQMLPKMHVVANKKTILLIPSIPLSFHTLSINRRDGSCTAHYRGQTNFVKLMQAQPEQQQPEINSNLDVAVTPVADSPAHASTSSLLAALTGTATAGVPINEQMSRSMHEARNQIFEEQLPEVGSSAAAAAVAAPGTPVSAGSVPRSRRGGKQGTSSPEPIPSPPQLAFTMDPTYNVLWVFDGAARKLRCHNVVASDINDSDANAATYRSLLSPELSLPDRVDSRVARSQASLNLLACLDILTSAQDNIPGCFEQPLLKQTQQTAETQAGEFQVVNRFDNFGGGWGYSGHSVEAIRFSADTDIVICGFGMFGGRGEYSCKLKLFDLGGDGGGYEKEGILISETKEVPYECGARSKHHILLPKPVSAVAGRWYLVWARIAGPSSDCGSCGQASVTTEDQVVFSFKSSKKANNGTDVNSGQIPAILYRLVTQDCKQTPAQMDADPVQRISRAFANSVSRECFESLVVLLSWSWDCFKLQLREERDRSRPLQLQQSLQYLGYVIKSCLRLLRKYTIEIYPQRNSSTSVATGGGSNAAHGSGVVTTAKSVQSKPNKDKNTPRVVGNAGVMAKYFGDPSTSVAPAMISSASSGGAPSTSASAAVAPGSGTPVTRKTNMENIQLAECIGNVRALLIGIFCDDIFKDIATDEGYELSLEILDECHLSFVACFDAFYPTSSLKWNCLCDLLAQMDRGALHSRLLSAILAGLCSPSVKLRATFSLLSAAGNERQSIISPSDNSGLPMLSSTDAHPYPVLVEQMIYRTQQEKSDFLSNSWTFKDVLVRLLDIIASPIRSRIEAIYSRSLGSLGYPGGKDCVNQGLIDNCCHLLARVLAEIVYQTAMGEYDKLFMPPRTLHSTGARFARCDVSRTWNTGNFGPDAIAFAVDRPGVAIAGAMVYSGSGSYDYQLELLYDNTADLQPQHKWETLESVSGSYDQDAVHNDLAEIKFDHPVHIKENARYALRLCSQGARTCSGDAGMPAVRGPCGAQFHFYACDLSFNGTTPARGQLPCILYYSTPMKQDGHSASGRTGDGSNVATHLEDRIMLLGPHEVSTRDTALQIAADITKKCTELLILARNAMAASCSPSDNSSNHTQTIDSEHNITPIEEHMDINWANNSRTAALPTAIDPQLSTARDLGKRIESFSKGLMETLKFDKRSTNPFEMEIEIGATEVEESADLRNGQSQSVSQSQSQSQSVPINGNERTADFEFAEQSAQQSMPQHLHSDSEEAPLEVAGMAAGGGVSVADGSGGVAGVGSQAAAVQLLEVFNLAASNMFHTLLPLVYAHIANLACSDPKSSVQILGLIKEILPHIAALNQLHVSKDQRQPEPAIFATQTSGSGNSNSSSTTSNHYCVVESDHPYKSASISSYRVEFPPCVQWLTIEFDPQCGTAQLEDYLLLSIPMRPASQAPPVPHVDDYLEQADNNVNGAGDRRRNTGGGIAGSGAAPNTHQRSASVQLTMASCCRSPGCGNAPGSAAAPSSMPLRSQDPNDREWIVVKKFNTASTWLHNVLILPGNCVEFSLETASLYAQDPHNNRYGFKCLVVGYDNPTSINASNSCLIRLEQELAYLGGMCSANLMKKELNLPDDKDVEDMSGIEETINTHHTLLSKGFALSEPQLTVHQALESYLPIGSQSNERQFLKDFISGAPGSSGARLAAWLQPESRLDPNKCELNTITEPLRYGWPSQVTVTIRDQYGDAVLVPELKVEIKAIPTGSGPNGSATGTGTSCTSVAEVSAPGPNLWMRRASRDTWGWGGMAPPPRINYEPTVKDKMVFKAITFMKPYANYSFEELRYASPVQTRVTELLNAKDMEDGTFSVQWTPSSVGAYCLAVTIDGIPLEEVYRVDVKEGILPPPTQRNSAQRRPQAPSKLRRFQARHSSGLRIRSHPTLQSEQVGVVRVGGVISFIDEIENDDGVWLRLSTESIRQHCTMGWYPTEAWCLQFNQHLARMLLQPVTDKEVNPVRKGVGAEEDVEEQPPVTPSASGEASPEPEPDPSPVLSPAKTKPGRFLSGHQSTNPFLYPAKHADLAEREAQVQEEREKEEEQVDDEDADDREPEQEALPAVELLPAHIGSAIAGVVGGGAIKLQALQKWFKGDAVDGPQPLTPSHSPPLAGVSVRELVRAMGGQDSPRGNGNRSQQEQDPEFSLASMRRPNYSASQTAALLSTPKHTPKRSAVVASETSGLEDELSLLQITTTTTGQGEQQSELQLATTSTASSASKRNPMGPIKRAMPPSFAESIRAVFAALLWHEGVVHDAMACASFLKFHPGLPKEGATVVTRRGESGDPRLQLSREQKAQQRHSVEVANAGNYLNIRPSTLETLTKSGNCSLHNRSKYRKNLLSGGGGAINSGDDTAQKLQALPEMVSVLPPALRCLVYLWEQICSGCVQIVQSNALEQREPRLLSPGSRDLNGDADTEGKEGKNSDQASAGEKDLGRKCKRKKKDDGSWCEICELFLPMPVTYHMRIAHPGCGKSAKGKGYNSVGIFCEGWAGNCGEGGKGASSWFLMCDPCRDRYLASCRSANNINSAARQLESSAAEGNELNLFGVKSTTLIANAEVYTTMRENATFLLELCSSSSSASGAAGSLAATSSSSKRSPQQMSVVAMPVVIEHQLGNSDLKPSTSRCSRMARLSGSKFCPGVGSGAFRKSFVGGPPTAPENVWLAPESFACLECLGTAGHEDLPYEMFGLGPNSNDNGYDRPLSEISYESCEPNNYDMLSGSLAPGTTAAASVGGGNLSKFHRSYSMGQGWASLAQHNHPPPHHPQQQHHQQQQMNLQLQQHQAPPVDGQPKVVYRRRNNSTSEGDGSLLICYPSEHLRRLVPQKLLASVSVMQTASGEGTGKDHATGTLGLDQSAGQNGGGNLLLTRPAMAFITQKHELDRLRAAMRRSLRIAACRIYALQALNWLLRSVTQGVCLHDLMWWFVSSLNPTGGHQPVERGEEASEPALEHPVAYTQISGRFAHLITQSLHVFLQSVADLTLHLPLGSPLQRVAIQCFGIRFRQADHQFLHSSHVFGNISKILSKSDEQNDAMAVSTILKPDCDVEHNQVHSVATGGSSGAGARLLCYTDLAGMFEVTVSSRPAMAESLTDNSTETFWESDEEDRNKCKIIELSLTKLNYACRYLLVHIDNSRDIQNKVLNVVFYAGQSLGDTNIIKSADVDPKACSWISAKICDDSCTHFRLELHGPENTLRVRQIKLLGLPIGGAVGSDDSSDHKHQPHLRLSHASRIQQQICEAETLRVFRLITGQVFGKLISNVSSDLVPPDSAGIGPPSGGAASTSLLADSLDLREHMVGILFSRSKLSHLQKQVIVHIVHAIRKEAQRAKEDWELANLAHVLKQSPQQQTAPALAASASCESTPERSRAPDTYCFEMLSMVLALSGSVVGRSYLSQQHGLLRDLLGLLHTGSDRVQRQVTALLRRILPEITPESFAELLGVQRLPPADYSIAHQSASDFDMSRLGLLDIFLAVIAKSLQLQVKVKTTVASTGPSGSGGVSGSSSGNGGAVLKAGQQEKTPAFVRLWSSLDLSVQQLRSRPPTGEPGTTDPFQFDALPPRKESKRNLNQRWFLNGVISTKQAESIISLIRDLASGKLSEKWSQITKAAIAESVLNLTRLEEIYRSPEHCTKTSTLWLALASLCVLERDHVEKLSSGQWSKLCDTRPLCSNHDDGETAAIIQCETCGSLCGDCDRFLHLNRKTRSHKRTVCKEEEEAIRVELHESCGRTKLFWLLALADSKTLKAMVEFRDGSHTIISGPQEAVGRCRFCGLTGNSGLLEIGNVCADAQCQEYAANSCLKTKPCGHACGGVTGERKCLPCLQHVCHTRENELAEELRDPKLTQDADDMCMICFVEALSCAPSIHLECGHVFHYHCCKAVLEKRWSGPRITFGFSLCPICKADIQHPLLSDILEPINGLKQDVKRKALMRIKYEGVVKDTDSKNVNMTQLAMDRYAYYVCFKCQKAYYGGEARCDAEIGEKFDPEELVCGGCSDVARAQMCPKHGTDFLEYKCRYCCSVAVFFCFGTTHFCDTCHDDFQRLTNIPKVKLPQCPAGPKAKQLLGDECPLHVMHPPTGEEFALGCGVCRNAQTF</sequence>
<name>HIW_DROME</name>
<comment type="function">
    <text evidence="1 8 10 12">Atypical E3 ubiquitin-protein ligase which specifically mediates ubiquitination of threonine and serine residues on target proteins, instead of ubiquitinating lysine residues (By similarity). Shows esterification activity towards both threonine and serine, with a preference for threonine, and acts via two essential catalytic cysteine residues that relay ubiquitin to its substrate via thioester intermediates (By similarity). Required in the presynaptic motoneuron to down-regulate the levels of wnd and restrain synaptic terminal growth at the neuromuscular junction (NMJ) together with Rae1 and Fsn (PubMed:10839352, PubMed:17697379, PubMed:21874015).</text>
</comment>
<comment type="catalytic activity">
    <reaction evidence="1">
        <text>[E2 ubiquitin-conjugating enzyme]-S-ubiquitinyl-L-cysteine + [acceptor protein]-L-threonine = [E2 ubiquitin-conjugating enzyme]-L-cysteine + [acceptor protein]-3-O-ubiquitinyl-L-threonine.</text>
        <dbReference type="EC" id="2.3.2.33"/>
    </reaction>
</comment>
<comment type="pathway">
    <text evidence="1">Protein modification; protein ubiquitination.</text>
</comment>
<comment type="subunit">
    <text evidence="10 12">Component of an E3 ubiquitin ligase complex composed of hiw, Rae1 and Fsn (PubMed:17697379, PubMed:21874015). Interacts with Rae1; the interaction with Rae1 may protect hiw from autophagy-mediated degradation (PubMed:21874015).</text>
</comment>
<comment type="subcellular location">
    <subcellularLocation>
        <location evidence="8">Synapse</location>
    </subcellularLocation>
    <subcellularLocation>
        <location evidence="8">Cell projection</location>
        <location evidence="8">Axon</location>
    </subcellularLocation>
</comment>
<comment type="tissue specificity">
    <text evidence="8 12">Express throughout the nervous system (PubMed:10839352, PubMed:21874015). Stage 13 embryos show expression in the central nervous system (CNS) at the longitudinal axon tracts around which the synaptic neuropil forms (PubMed:10839352). Expression outside the CNS starts at stage 16 in presynaptic terminals at the periactive zone which surround the active zone (PubMed:10839352). Expression at neuromuscular junctions (NMJ) and in the CNS is also seen in third instar larvae (at protein level) (PubMed:10839352).</text>
</comment>
<comment type="domain">
    <text evidence="2">The PHR domains are compact beta-sandwich folds composed of 11 antiparallel strands and decorated with conserved apical loops. They are likely to play a structural role and mediate interactions with substrates or partners (By similarity).</text>
</comment>
<comment type="domain">
    <text evidence="1">The tandem cysteine domain region confers threonine specificity and contains the two essential catalytic cysteine residues that relay ubiquitin. It binds four zinc ions in a C5HC7HC2 configuration.</text>
</comment>
<comment type="disruption phenotype">
    <text evidence="8">Flies display NMJ synapses that grow exuberantly and are expanded in both the number of boutons and in the extent and length of branches.</text>
</comment>
<comment type="similarity">
    <text evidence="14">Belongs to the RING-Cys relay (RCR) family.</text>
</comment>
<comment type="sequence caution" evidence="14">
    <conflict type="erroneous gene model prediction">
        <sequence resource="EMBL-CDS" id="AAF48411"/>
    </conflict>
</comment>
<comment type="sequence caution" evidence="14">
    <conflict type="erroneous initiation">
        <sequence resource="EMBL-CDS" id="AAM29381"/>
    </conflict>
</comment>
<proteinExistence type="evidence at protein level"/>
<dbReference type="EC" id="2.3.2.33" evidence="1"/>
<dbReference type="EMBL" id="AF262977">
    <property type="protein sequence ID" value="AAF76150.1"/>
    <property type="molecule type" value="mRNA"/>
</dbReference>
<dbReference type="EMBL" id="AE014298">
    <property type="protein sequence ID" value="AAF48411.2"/>
    <property type="status" value="ALT_SEQ"/>
    <property type="molecule type" value="Genomic_DNA"/>
</dbReference>
<dbReference type="EMBL" id="AY113376">
    <property type="protein sequence ID" value="AAM29381.1"/>
    <property type="status" value="ALT_INIT"/>
    <property type="molecule type" value="mRNA"/>
</dbReference>
<dbReference type="RefSeq" id="NP_001285258.1">
    <property type="nucleotide sequence ID" value="NM_001298329.1"/>
</dbReference>
<dbReference type="RefSeq" id="NP_511159.3">
    <property type="nucleotide sequence ID" value="NM_078604.4"/>
</dbReference>
<dbReference type="SMR" id="Q9NB71"/>
<dbReference type="BioGRID" id="58787">
    <property type="interactions" value="28"/>
</dbReference>
<dbReference type="FunCoup" id="Q9NB71">
    <property type="interactions" value="2007"/>
</dbReference>
<dbReference type="IntAct" id="Q9NB71">
    <property type="interactions" value="3"/>
</dbReference>
<dbReference type="STRING" id="7227.FBpp0311921"/>
<dbReference type="GlyGen" id="Q9NB71">
    <property type="glycosylation" value="2 sites"/>
</dbReference>
<dbReference type="iPTMnet" id="Q9NB71"/>
<dbReference type="PaxDb" id="7227-FBpp0073787"/>
<dbReference type="EnsemblMetazoa" id="FBtr0073970">
    <property type="protein sequence ID" value="FBpp0073787"/>
    <property type="gene ID" value="FBgn0030600"/>
</dbReference>
<dbReference type="EnsemblMetazoa" id="FBtr0346087">
    <property type="protein sequence ID" value="FBpp0311921"/>
    <property type="gene ID" value="FBgn0030600"/>
</dbReference>
<dbReference type="GeneID" id="32429"/>
<dbReference type="KEGG" id="dme:Dmel_CG32592"/>
<dbReference type="UCSC" id="CG32592-RA">
    <property type="organism name" value="d. melanogaster"/>
</dbReference>
<dbReference type="AGR" id="FB:FBgn0030600"/>
<dbReference type="CTD" id="32429"/>
<dbReference type="FlyBase" id="FBgn0030600">
    <property type="gene designation" value="hiw"/>
</dbReference>
<dbReference type="VEuPathDB" id="VectorBase:FBgn0030600"/>
<dbReference type="eggNOG" id="KOG1428">
    <property type="taxonomic scope" value="Eukaryota"/>
</dbReference>
<dbReference type="HOGENOM" id="CLU_000063_0_0_1"/>
<dbReference type="InParanoid" id="Q9NB71"/>
<dbReference type="OMA" id="MAHPGCG"/>
<dbReference type="OrthoDB" id="6050183at2759"/>
<dbReference type="PhylomeDB" id="Q9NB71"/>
<dbReference type="SignaLink" id="Q9NB71"/>
<dbReference type="UniPathway" id="UPA00143"/>
<dbReference type="BioGRID-ORCS" id="32429">
    <property type="hits" value="0 hits in 1 CRISPR screen"/>
</dbReference>
<dbReference type="GenomeRNAi" id="32429"/>
<dbReference type="PRO" id="PR:Q9NB71"/>
<dbReference type="Proteomes" id="UP000000803">
    <property type="component" value="Chromosome X"/>
</dbReference>
<dbReference type="Bgee" id="FBgn0030600">
    <property type="expression patterns" value="Expressed in midgut large flat cell (Drosophila) in digestive tract and 149 other cell types or tissues"/>
</dbReference>
<dbReference type="ExpressionAtlas" id="Q9NB71">
    <property type="expression patterns" value="baseline and differential"/>
</dbReference>
<dbReference type="GO" id="GO:0030424">
    <property type="term" value="C:axon"/>
    <property type="evidence" value="ECO:0007669"/>
    <property type="project" value="UniProtKB-SubCell"/>
</dbReference>
<dbReference type="GO" id="GO:0031410">
    <property type="term" value="C:cytoplasmic vesicle"/>
    <property type="evidence" value="ECO:0000314"/>
    <property type="project" value="FlyBase"/>
</dbReference>
<dbReference type="GO" id="GO:0005634">
    <property type="term" value="C:nucleus"/>
    <property type="evidence" value="ECO:0000318"/>
    <property type="project" value="GO_Central"/>
</dbReference>
<dbReference type="GO" id="GO:0005886">
    <property type="term" value="C:plasma membrane"/>
    <property type="evidence" value="ECO:0000314"/>
    <property type="project" value="FlyBase"/>
</dbReference>
<dbReference type="GO" id="GO:0045202">
    <property type="term" value="C:synapse"/>
    <property type="evidence" value="ECO:0007669"/>
    <property type="project" value="UniProtKB-SubCell"/>
</dbReference>
<dbReference type="GO" id="GO:0061630">
    <property type="term" value="F:ubiquitin protein ligase activity"/>
    <property type="evidence" value="ECO:0000250"/>
    <property type="project" value="FlyBase"/>
</dbReference>
<dbReference type="GO" id="GO:0008270">
    <property type="term" value="F:zinc ion binding"/>
    <property type="evidence" value="ECO:0000255"/>
    <property type="project" value="FlyBase"/>
</dbReference>
<dbReference type="GO" id="GO:0007628">
    <property type="term" value="P:adult walking behavior"/>
    <property type="evidence" value="ECO:0000303"/>
    <property type="project" value="FlyBase"/>
</dbReference>
<dbReference type="GO" id="GO:0006914">
    <property type="term" value="P:autophagy"/>
    <property type="evidence" value="ECO:0000314"/>
    <property type="project" value="FlyBase"/>
</dbReference>
<dbReference type="GO" id="GO:0007411">
    <property type="term" value="P:axon guidance"/>
    <property type="evidence" value="ECO:0000318"/>
    <property type="project" value="GO_Central"/>
</dbReference>
<dbReference type="GO" id="GO:0040011">
    <property type="term" value="P:locomotion"/>
    <property type="evidence" value="ECO:0000303"/>
    <property type="project" value="FlyBase"/>
</dbReference>
<dbReference type="GO" id="GO:0007616">
    <property type="term" value="P:long-term memory"/>
    <property type="evidence" value="ECO:0000315"/>
    <property type="project" value="FlyBase"/>
</dbReference>
<dbReference type="GO" id="GO:0030514">
    <property type="term" value="P:negative regulation of BMP signaling pathway"/>
    <property type="evidence" value="ECO:0000316"/>
    <property type="project" value="UniProtKB"/>
</dbReference>
<dbReference type="GO" id="GO:0010629">
    <property type="term" value="P:negative regulation of gene expression"/>
    <property type="evidence" value="ECO:0000315"/>
    <property type="project" value="UniProtKB"/>
</dbReference>
<dbReference type="GO" id="GO:0045886">
    <property type="term" value="P:negative regulation of synaptic assembly at neuromuscular junction"/>
    <property type="evidence" value="ECO:0000315"/>
    <property type="project" value="UniProtKB"/>
</dbReference>
<dbReference type="GO" id="GO:1900075">
    <property type="term" value="P:positive regulation of neuromuscular synaptic transmission"/>
    <property type="evidence" value="ECO:0000315"/>
    <property type="project" value="FlyBase"/>
</dbReference>
<dbReference type="GO" id="GO:0016567">
    <property type="term" value="P:protein ubiquitination"/>
    <property type="evidence" value="ECO:0000250"/>
    <property type="project" value="UniProtKB"/>
</dbReference>
<dbReference type="GO" id="GO:0008582">
    <property type="term" value="P:regulation of synaptic assembly at neuromuscular junction"/>
    <property type="evidence" value="ECO:0000315"/>
    <property type="project" value="FlyBase"/>
</dbReference>
<dbReference type="GO" id="GO:2000331">
    <property type="term" value="P:regulation of terminal button organization"/>
    <property type="evidence" value="ECO:0000315"/>
    <property type="project" value="FlyBase"/>
</dbReference>
<dbReference type="GO" id="GO:0048678">
    <property type="term" value="P:response to axon injury"/>
    <property type="evidence" value="ECO:0000315"/>
    <property type="project" value="FlyBase"/>
</dbReference>
<dbReference type="GO" id="GO:0050808">
    <property type="term" value="P:synapse organization"/>
    <property type="evidence" value="ECO:0000314"/>
    <property type="project" value="FlyBase"/>
</dbReference>
<dbReference type="CDD" id="cd19799">
    <property type="entry name" value="Bbox2_MYCBP2"/>
    <property type="match status" value="1"/>
</dbReference>
<dbReference type="CDD" id="cd16463">
    <property type="entry name" value="RING-H2_PHR"/>
    <property type="match status" value="1"/>
</dbReference>
<dbReference type="FunFam" id="3.30.40.10:FF:000078">
    <property type="entry name" value="E3 ubiquitin-protein ligase MYCBP2 isoform X1"/>
    <property type="match status" value="1"/>
</dbReference>
<dbReference type="FunFam" id="2.130.10.30:FF:000051">
    <property type="entry name" value="Highwire, isoform B"/>
    <property type="match status" value="1"/>
</dbReference>
<dbReference type="Gene3D" id="2.60.120.260">
    <property type="entry name" value="Galactose-binding domain-like"/>
    <property type="match status" value="1"/>
</dbReference>
<dbReference type="Gene3D" id="2.60.40.10">
    <property type="entry name" value="Immunoglobulins"/>
    <property type="match status" value="1"/>
</dbReference>
<dbReference type="Gene3D" id="2.60.120.820">
    <property type="entry name" value="PHR domain"/>
    <property type="match status" value="2"/>
</dbReference>
<dbReference type="Gene3D" id="2.130.10.30">
    <property type="entry name" value="Regulator of chromosome condensation 1/beta-lactamase-inhibitor protein II"/>
    <property type="match status" value="2"/>
</dbReference>
<dbReference type="Gene3D" id="3.30.40.10">
    <property type="entry name" value="Zinc/RING finger domain, C3HC4 (zinc finger)"/>
    <property type="match status" value="1"/>
</dbReference>
<dbReference type="InterPro" id="IPR004939">
    <property type="entry name" value="APC_su10/DOC_dom"/>
</dbReference>
<dbReference type="InterPro" id="IPR017868">
    <property type="entry name" value="Filamin/ABP280_repeat-like"/>
</dbReference>
<dbReference type="InterPro" id="IPR008979">
    <property type="entry name" value="Galactose-bd-like_sf"/>
</dbReference>
<dbReference type="InterPro" id="IPR013783">
    <property type="entry name" value="Ig-like_fold"/>
</dbReference>
<dbReference type="InterPro" id="IPR014756">
    <property type="entry name" value="Ig_E-set"/>
</dbReference>
<dbReference type="InterPro" id="IPR012983">
    <property type="entry name" value="PHR"/>
</dbReference>
<dbReference type="InterPro" id="IPR038648">
    <property type="entry name" value="PHR_sf"/>
</dbReference>
<dbReference type="InterPro" id="IPR009091">
    <property type="entry name" value="RCC1/BLIP-II"/>
</dbReference>
<dbReference type="InterPro" id="IPR000408">
    <property type="entry name" value="Reg_chr_condens"/>
</dbReference>
<dbReference type="InterPro" id="IPR001841">
    <property type="entry name" value="Znf_RING"/>
</dbReference>
<dbReference type="InterPro" id="IPR013083">
    <property type="entry name" value="Znf_RING/FYVE/PHD"/>
</dbReference>
<dbReference type="PANTHER" id="PTHR45943">
    <property type="entry name" value="E3 UBIQUITIN-PROTEIN LIGASE MYCBP2"/>
    <property type="match status" value="1"/>
</dbReference>
<dbReference type="PANTHER" id="PTHR45943:SF1">
    <property type="entry name" value="E3 UBIQUITIN-PROTEIN LIGASE MYCBP2"/>
    <property type="match status" value="1"/>
</dbReference>
<dbReference type="Pfam" id="PF08005">
    <property type="entry name" value="PHR"/>
    <property type="match status" value="2"/>
</dbReference>
<dbReference type="Pfam" id="PF00415">
    <property type="entry name" value="RCC1"/>
    <property type="match status" value="1"/>
</dbReference>
<dbReference type="Pfam" id="PF13540">
    <property type="entry name" value="RCC1_2"/>
    <property type="match status" value="1"/>
</dbReference>
<dbReference type="PRINTS" id="PR00633">
    <property type="entry name" value="RCCNDNSATION"/>
</dbReference>
<dbReference type="SMART" id="SM01337">
    <property type="entry name" value="APC10"/>
    <property type="match status" value="1"/>
</dbReference>
<dbReference type="SMART" id="SM00184">
    <property type="entry name" value="RING"/>
    <property type="match status" value="2"/>
</dbReference>
<dbReference type="SUPFAM" id="SSF81296">
    <property type="entry name" value="E set domains"/>
    <property type="match status" value="1"/>
</dbReference>
<dbReference type="SUPFAM" id="SSF49785">
    <property type="entry name" value="Galactose-binding domain-like"/>
    <property type="match status" value="1"/>
</dbReference>
<dbReference type="SUPFAM" id="SSF50985">
    <property type="entry name" value="RCC1/BLIP-II"/>
    <property type="match status" value="1"/>
</dbReference>
<dbReference type="SUPFAM" id="SSF57850">
    <property type="entry name" value="RING/U-box"/>
    <property type="match status" value="1"/>
</dbReference>
<dbReference type="PROSITE" id="PS51284">
    <property type="entry name" value="DOC"/>
    <property type="match status" value="1"/>
</dbReference>
<dbReference type="PROSITE" id="PS50194">
    <property type="entry name" value="FILAMIN_REPEAT"/>
    <property type="match status" value="1"/>
</dbReference>
<dbReference type="PROSITE" id="PS00626">
    <property type="entry name" value="RCC1_2"/>
    <property type="match status" value="2"/>
</dbReference>
<dbReference type="PROSITE" id="PS50012">
    <property type="entry name" value="RCC1_3"/>
    <property type="match status" value="1"/>
</dbReference>
<dbReference type="PROSITE" id="PS50089">
    <property type="entry name" value="ZF_RING_2"/>
    <property type="match status" value="1"/>
</dbReference>
<organism>
    <name type="scientific">Drosophila melanogaster</name>
    <name type="common">Fruit fly</name>
    <dbReference type="NCBI Taxonomy" id="7227"/>
    <lineage>
        <taxon>Eukaryota</taxon>
        <taxon>Metazoa</taxon>
        <taxon>Ecdysozoa</taxon>
        <taxon>Arthropoda</taxon>
        <taxon>Hexapoda</taxon>
        <taxon>Insecta</taxon>
        <taxon>Pterygota</taxon>
        <taxon>Neoptera</taxon>
        <taxon>Endopterygota</taxon>
        <taxon>Diptera</taxon>
        <taxon>Brachycera</taxon>
        <taxon>Muscomorpha</taxon>
        <taxon>Ephydroidea</taxon>
        <taxon>Drosophilidae</taxon>
        <taxon>Drosophila</taxon>
        <taxon>Sophophora</taxon>
    </lineage>
</organism>